<comment type="function">
    <text evidence="4 5 6">Contributes to various developmental events through its interactions with multiple signaling pathways (PubMed:15363410, PubMed:16319115, PubMed:17925852). Dorsalizing factor which functions as an inhibitor of bone morphogenetic proteins (BMP) during gastrulation (PubMed:15363410, PubMed:16319115, PubMed:17925852). Promotes dll1-dependent activation of Notch signaling and is required for neural crest formation (PubMed:16319115). Induces endoderm and dorsal mesoderm formation by enhancing nodal2/Xnr2 activity while inhibiting ventrolateral mesoderm formation through inhibition of fgf8 (PubMed:17925852).</text>
</comment>
<comment type="subunit">
    <text evidence="5 6">Interacts with bmp4 (PubMed:16319115). Interacts with dll1 (via extracellular region) (PubMed:16319115). Interacts with fgf8; inhibits fgf8 signaling (PubMed:17925852). Interacts with nodal2/Xnr2; enhances nodal2 activity (PubMed:17925852).</text>
</comment>
<comment type="subcellular location">
    <subcellularLocation>
        <location evidence="1">Secreted</location>
    </subcellularLocation>
</comment>
<comment type="tissue specificity">
    <text evidence="4 5 6">During embryogenesis, localized to the animal hemisphere during late blastula and gastrula stages (PubMed:17925852). At stage 10, expression is also detected around the dorsal blastopore lip (PubMed:15363410, PubMed:17925852). Expressed in the mandibular crest segment, branchial crest segment and differentiating somites at stage 21/22 (PubMed:15363410). Expressed in the germ ring including the shield at shield stage and in the tailbud at the 10-somite stage (PubMed:15363410). At the early neurula stage (stage 13), expression is hardly detectable in the presumptive neural plate region, and restricted to the non-neural ectoderm where its levels increase by stage 14, especially in the presumptive anterior neural fold (PubMed:16319115). Also expressed in the prospective cranial neural crest (PubMed:16319115). At the early tailbud stage (stage 23), expressed in cranial neural crest cells, the dorsal retina and the lens placode (PubMed:16319115).</text>
</comment>
<comment type="developmental stage">
    <text evidence="6">In the embryo, expression peaks during germ layer formation and early gastrulation.</text>
</comment>
<comment type="disruption phenotype">
    <text evidence="4 5 6">Morpholino knockdown causes anterior neural developmental defects (PubMed:15363410). Morpholino knockdown impairs neural crest formation (PubMed:16319115). Morpholino knockdown results in impaired endoderm formation and mesoderm patterning (PubMed:17925852).</text>
</comment>
<comment type="miscellaneous">
    <text evidence="1">This factor is named 'Tsukushi' because its expression pattern in chick embryos is similar to the shape of the Japanese horsetail plant, tsukushi.</text>
</comment>
<name>TSKA_XENLA</name>
<evidence type="ECO:0000250" key="1">
    <source>
        <dbReference type="UniProtKB" id="Q65Z91"/>
    </source>
</evidence>
<evidence type="ECO:0000250" key="2">
    <source>
        <dbReference type="UniProtKB" id="Q8CBR6"/>
    </source>
</evidence>
<evidence type="ECO:0000255" key="3"/>
<evidence type="ECO:0000269" key="4">
    <source>
    </source>
</evidence>
<evidence type="ECO:0000269" key="5">
    <source>
    </source>
</evidence>
<evidence type="ECO:0000269" key="6">
    <source>
    </source>
</evidence>
<evidence type="ECO:0000303" key="7">
    <source>
    </source>
</evidence>
<evidence type="ECO:0000305" key="8"/>
<evidence type="ECO:0000312" key="9">
    <source>
        <dbReference type="EMBL" id="AAI08804.1"/>
    </source>
</evidence>
<evidence type="ECO:0000312" key="10">
    <source>
        <dbReference type="EMBL" id="BAD44778.1"/>
    </source>
</evidence>
<evidence type="ECO:0000312" key="11">
    <source>
        <dbReference type="EMBL" id="OCT96413.1"/>
    </source>
</evidence>
<evidence type="ECO:0000312" key="12">
    <source>
        <dbReference type="Proteomes" id="UP000186698"/>
    </source>
</evidence>
<evidence type="ECO:0000312" key="13">
    <source>
        <dbReference type="Xenbase" id="XB-GENE-866233"/>
    </source>
</evidence>
<reference evidence="10" key="1">
    <citation type="journal article" date="2004" name="Dev. Cell">
        <title>Tsukushi functions as an organizer inducer by inhibition of BMP activity in cooperation with chordin.</title>
        <authorList>
            <person name="Ohta K."/>
            <person name="Lupo G."/>
            <person name="Kuriyama S."/>
            <person name="Keynes R."/>
            <person name="Holt C.E."/>
            <person name="Harris W.A."/>
            <person name="Tanaka H."/>
            <person name="Ohnuma S."/>
        </authorList>
    </citation>
    <scope>NUCLEOTIDE SEQUENCE [MRNA]</scope>
    <scope>FUNCTION</scope>
    <scope>TISSUE SPECIFICITY</scope>
    <scope>DISRUPTION PHENOTYPE</scope>
</reference>
<reference evidence="12" key="2">
    <citation type="journal article" date="2016" name="Nature">
        <title>Genome evolution in the allotetraploid frog Xenopus laevis.</title>
        <authorList>
            <person name="Session A.M."/>
            <person name="Uno Y."/>
            <person name="Kwon T."/>
            <person name="Chapman J.A."/>
            <person name="Toyoda A."/>
            <person name="Takahashi S."/>
            <person name="Fukui A."/>
            <person name="Hikosaka A."/>
            <person name="Suzuki A."/>
            <person name="Kondo M."/>
            <person name="van Heeringen S.J."/>
            <person name="Quigley I."/>
            <person name="Heinz S."/>
            <person name="Ogino H."/>
            <person name="Ochi H."/>
            <person name="Hellsten U."/>
            <person name="Lyons J.B."/>
            <person name="Simakov O."/>
            <person name="Putnam N."/>
            <person name="Stites J."/>
            <person name="Kuroki Y."/>
            <person name="Tanaka T."/>
            <person name="Michiue T."/>
            <person name="Watanabe M."/>
            <person name="Bogdanovic O."/>
            <person name="Lister R."/>
            <person name="Georgiou G."/>
            <person name="Paranjpe S.S."/>
            <person name="van Kruijsbergen I."/>
            <person name="Shu S."/>
            <person name="Carlson J."/>
            <person name="Kinoshita T."/>
            <person name="Ohta Y."/>
            <person name="Mawaribuchi S."/>
            <person name="Jenkins J."/>
            <person name="Grimwood J."/>
            <person name="Schmutz J."/>
            <person name="Mitros T."/>
            <person name="Mozaffari S.V."/>
            <person name="Suzuki Y."/>
            <person name="Haramoto Y."/>
            <person name="Yamamoto T.S."/>
            <person name="Takagi C."/>
            <person name="Heald R."/>
            <person name="Miller K."/>
            <person name="Haudenschild C."/>
            <person name="Kitzman J."/>
            <person name="Nakayama T."/>
            <person name="Izutsu Y."/>
            <person name="Robert J."/>
            <person name="Fortriede J."/>
            <person name="Burns K."/>
            <person name="Lotay V."/>
            <person name="Karimi K."/>
            <person name="Yasuoka Y."/>
            <person name="Dichmann D.S."/>
            <person name="Flajnik M.F."/>
            <person name="Houston D.W."/>
            <person name="Shendure J."/>
            <person name="DuPasquier L."/>
            <person name="Vize P.D."/>
            <person name="Zorn A.M."/>
            <person name="Ito M."/>
            <person name="Marcotte E.M."/>
            <person name="Wallingford J.B."/>
            <person name="Ito Y."/>
            <person name="Asashima M."/>
            <person name="Ueno N."/>
            <person name="Matsuda Y."/>
            <person name="Veenstra G.J."/>
            <person name="Fujiyama A."/>
            <person name="Harland R.M."/>
            <person name="Taira M."/>
            <person name="Rokhsar D.S."/>
        </authorList>
    </citation>
    <scope>NUCLEOTIDE SEQUENCE [LARGE SCALE GENOMIC DNA]</scope>
    <source>
        <strain evidence="12">J</strain>
    </source>
</reference>
<reference evidence="9" key="3">
    <citation type="submission" date="2005-11" db="EMBL/GenBank/DDBJ databases">
        <authorList>
            <consortium name="NIH - Xenopus Gene Collection (XGC) project"/>
        </authorList>
    </citation>
    <scope>NUCLEOTIDE SEQUENCE [LARGE SCALE MRNA]</scope>
    <source>
        <tissue evidence="9">Oocyte</tissue>
    </source>
</reference>
<reference evidence="8" key="4">
    <citation type="journal article" date="2006" name="Development">
        <title>Tsukushi controls ectodermal patterning and neural crest specification in Xenopus by direct regulation of BMP4 and X-delta-1 activity.</title>
        <authorList>
            <person name="Kuriyama S."/>
            <person name="Lupo G."/>
            <person name="Ohta K."/>
            <person name="Ohnuma S."/>
            <person name="Harris W.A."/>
            <person name="Tanaka H."/>
        </authorList>
    </citation>
    <scope>FUNCTION</scope>
    <scope>INTERACTION WITH BMP4 AND DLL1</scope>
    <scope>TISSUE SPECIFICITY</scope>
    <scope>DISRUPTION PHENOTYPE</scope>
</reference>
<reference evidence="8" key="5">
    <citation type="journal article" date="2007" name="PLoS ONE">
        <title>Tsukushi modulates Xnr2, FGF and BMP signaling: regulation of Xenopus germ layer formation.</title>
        <authorList>
            <person name="Morris S.A."/>
            <person name="Almeida A.D."/>
            <person name="Tanaka H."/>
            <person name="Ohta K."/>
            <person name="Ohnuma S."/>
        </authorList>
    </citation>
    <scope>FUNCTION</scope>
    <scope>INTERACTION WITH FGF8 AND NODAL2</scope>
    <scope>TISSUE SPECIFICITY</scope>
    <scope>DEVELOPMENTAL STAGE</scope>
    <scope>DISRUPTION PHENOTYPE</scope>
</reference>
<accession>Q65YW8</accession>
<accession>Q32N68</accession>
<sequence>MALSSWIFFLLVHGIVGGSRTCFPGCRCIVDNFGLFHSFSLTKVDCSRVGPHVVPVSIPLDTSYLDLSSNRLKRINESVLSGPGYTTLMNLNLSYNQIVKISYSTFSKLRYLESLDLSHNLLETLPDGSFLYSRLTELDLSSNKIQKVGVGAFTLKSQGRSMTINLANNEIHSIFRGAERPVPNIHSLMLYGNQLLSVPDLHGIPLRHLNLDRNPLSKIEKVSFLGLESLTHLSLSDLPNLREVSPYSFKSLTSLLELDLSNNPNLKSLSSDMFFGLKALQELNLAYSGVASLPKDIMLHLPSMKSITWGENIRCLKTVKESIFHAQKGRVRKEVLLCHDDNGAVPAQDIL</sequence>
<proteinExistence type="evidence at protein level"/>
<protein>
    <recommendedName>
        <fullName evidence="8">Tsukushi-A</fullName>
    </recommendedName>
    <alternativeName>
        <fullName evidence="2">Leucine-rich repeat-containing protein 54</fullName>
    </alternativeName>
    <alternativeName>
        <fullName evidence="7">X-TSK</fullName>
    </alternativeName>
</protein>
<gene>
    <name evidence="13" type="primary">tsku.L</name>
    <name evidence="2" type="synonym">lrrc54</name>
    <name evidence="11" type="ORF">XELAEV_18014091mg</name>
</gene>
<feature type="signal peptide" evidence="3">
    <location>
        <begin position="1"/>
        <end position="17"/>
    </location>
</feature>
<feature type="chain" id="PRO_5010506311" description="Tsukushi-A" evidence="3">
    <location>
        <begin position="18"/>
        <end position="351"/>
    </location>
</feature>
<feature type="repeat" description="LRR 1" evidence="3">
    <location>
        <begin position="59"/>
        <end position="82"/>
    </location>
</feature>
<feature type="repeat" description="LRR 2" evidence="3">
    <location>
        <begin position="85"/>
        <end position="108"/>
    </location>
</feature>
<feature type="repeat" description="LRR 3" evidence="3">
    <location>
        <begin position="109"/>
        <end position="132"/>
    </location>
</feature>
<feature type="repeat" description="LRR 4" evidence="3">
    <location>
        <begin position="134"/>
        <end position="155"/>
    </location>
</feature>
<feature type="repeat" description="LRR 5" evidence="3">
    <location>
        <begin position="158"/>
        <end position="181"/>
    </location>
</feature>
<feature type="repeat" description="LRR 6" evidence="3">
    <location>
        <begin position="182"/>
        <end position="203"/>
    </location>
</feature>
<feature type="repeat" description="LRR 7" evidence="3">
    <location>
        <begin position="204"/>
        <end position="226"/>
    </location>
</feature>
<feature type="repeat" description="LRR 8" evidence="3">
    <location>
        <begin position="252"/>
        <end position="276"/>
    </location>
</feature>
<feature type="repeat" description="LRR 9" evidence="3">
    <location>
        <begin position="277"/>
        <end position="300"/>
    </location>
</feature>
<feature type="sequence conflict" description="In Ref. 3; AAI08804." evidence="8" ref="3">
    <original>T</original>
    <variation>A</variation>
    <location>
        <position position="163"/>
    </location>
</feature>
<organism evidence="10">
    <name type="scientific">Xenopus laevis</name>
    <name type="common">African clawed frog</name>
    <dbReference type="NCBI Taxonomy" id="8355"/>
    <lineage>
        <taxon>Eukaryota</taxon>
        <taxon>Metazoa</taxon>
        <taxon>Chordata</taxon>
        <taxon>Craniata</taxon>
        <taxon>Vertebrata</taxon>
        <taxon>Euteleostomi</taxon>
        <taxon>Amphibia</taxon>
        <taxon>Batrachia</taxon>
        <taxon>Anura</taxon>
        <taxon>Pipoidea</taxon>
        <taxon>Pipidae</taxon>
        <taxon>Xenopodinae</taxon>
        <taxon>Xenopus</taxon>
        <taxon>Xenopus</taxon>
    </lineage>
</organism>
<dbReference type="EMBL" id="AB176536">
    <property type="protein sequence ID" value="BAD44778.1"/>
    <property type="molecule type" value="mRNA"/>
</dbReference>
<dbReference type="EMBL" id="CM004468">
    <property type="protein sequence ID" value="OCT96413.1"/>
    <property type="molecule type" value="Genomic_DNA"/>
</dbReference>
<dbReference type="EMBL" id="BC108803">
    <property type="protein sequence ID" value="AAI08804.1"/>
    <property type="molecule type" value="mRNA"/>
</dbReference>
<dbReference type="RefSeq" id="NP_001088996.1">
    <property type="nucleotide sequence ID" value="NM_001095527.1"/>
</dbReference>
<dbReference type="RefSeq" id="XP_041438749.1">
    <property type="nucleotide sequence ID" value="XM_041582815.1"/>
</dbReference>
<dbReference type="RefSeq" id="XP_041438750.1">
    <property type="nucleotide sequence ID" value="XM_041582816.1"/>
</dbReference>
<dbReference type="RefSeq" id="XP_041438751.1">
    <property type="nucleotide sequence ID" value="XM_041582817.1"/>
</dbReference>
<dbReference type="SMR" id="Q65YW8"/>
<dbReference type="STRING" id="8355.Q65YW8"/>
<dbReference type="PaxDb" id="8355-Q65YW8"/>
<dbReference type="DNASU" id="496379"/>
<dbReference type="GeneID" id="496379"/>
<dbReference type="AGR" id="Xenbase:XB-GENE-866233"/>
<dbReference type="Xenbase" id="XB-GENE-866233">
    <property type="gene designation" value="tsku.L"/>
</dbReference>
<dbReference type="OMA" id="CIDTQEP"/>
<dbReference type="Proteomes" id="UP000186698">
    <property type="component" value="Chromosome 2L"/>
</dbReference>
<dbReference type="Proteomes" id="UP000694892">
    <property type="component" value="Chromosome 2L"/>
</dbReference>
<dbReference type="Bgee" id="496379">
    <property type="expression patterns" value="Expressed in gastrula and 19 other cell types or tissues"/>
</dbReference>
<dbReference type="GO" id="GO:0031012">
    <property type="term" value="C:extracellular matrix"/>
    <property type="evidence" value="ECO:0000318"/>
    <property type="project" value="GO_Central"/>
</dbReference>
<dbReference type="GO" id="GO:0005615">
    <property type="term" value="C:extracellular space"/>
    <property type="evidence" value="ECO:0000250"/>
    <property type="project" value="UniProtKB"/>
</dbReference>
<dbReference type="GO" id="GO:0098868">
    <property type="term" value="P:bone growth"/>
    <property type="evidence" value="ECO:0000250"/>
    <property type="project" value="UniProtKB"/>
</dbReference>
<dbReference type="GO" id="GO:0097009">
    <property type="term" value="P:energy homeostasis"/>
    <property type="evidence" value="ECO:0000250"/>
    <property type="project" value="UniProtKB"/>
</dbReference>
<dbReference type="GO" id="GO:0007399">
    <property type="term" value="P:nervous system development"/>
    <property type="evidence" value="ECO:0007669"/>
    <property type="project" value="UniProtKB-KW"/>
</dbReference>
<dbReference type="Gene3D" id="3.80.10.10">
    <property type="entry name" value="Ribonuclease Inhibitor"/>
    <property type="match status" value="2"/>
</dbReference>
<dbReference type="InterPro" id="IPR050328">
    <property type="entry name" value="Dev_Immune_Receptor"/>
</dbReference>
<dbReference type="InterPro" id="IPR001611">
    <property type="entry name" value="Leu-rich_rpt"/>
</dbReference>
<dbReference type="InterPro" id="IPR003591">
    <property type="entry name" value="Leu-rich_rpt_typical-subtyp"/>
</dbReference>
<dbReference type="InterPro" id="IPR032675">
    <property type="entry name" value="LRR_dom_sf"/>
</dbReference>
<dbReference type="PANTHER" id="PTHR24373">
    <property type="entry name" value="SLIT RELATED LEUCINE-RICH REPEAT NEURONAL PROTEIN"/>
    <property type="match status" value="1"/>
</dbReference>
<dbReference type="PANTHER" id="PTHR24373:SF275">
    <property type="entry name" value="TIR DOMAIN-CONTAINING PROTEIN"/>
    <property type="match status" value="1"/>
</dbReference>
<dbReference type="Pfam" id="PF13855">
    <property type="entry name" value="LRR_8"/>
    <property type="match status" value="2"/>
</dbReference>
<dbReference type="SMART" id="SM00369">
    <property type="entry name" value="LRR_TYP"/>
    <property type="match status" value="8"/>
</dbReference>
<dbReference type="SUPFAM" id="SSF52058">
    <property type="entry name" value="L domain-like"/>
    <property type="match status" value="1"/>
</dbReference>
<dbReference type="PROSITE" id="PS51450">
    <property type="entry name" value="LRR"/>
    <property type="match status" value="9"/>
</dbReference>
<keyword id="KW-0217">Developmental protein</keyword>
<keyword id="KW-0433">Leucine-rich repeat</keyword>
<keyword id="KW-0524">Neurogenesis</keyword>
<keyword id="KW-1185">Reference proteome</keyword>
<keyword id="KW-0677">Repeat</keyword>
<keyword id="KW-0964">Secreted</keyword>
<keyword id="KW-0732">Signal</keyword>